<reference key="1">
    <citation type="journal article" date="2004" name="Nature">
        <title>Genome sequence of Silicibacter pomeroyi reveals adaptations to the marine environment.</title>
        <authorList>
            <person name="Moran M.A."/>
            <person name="Buchan A."/>
            <person name="Gonzalez J.M."/>
            <person name="Heidelberg J.F."/>
            <person name="Whitman W.B."/>
            <person name="Kiene R.P."/>
            <person name="Henriksen J.R."/>
            <person name="King G.M."/>
            <person name="Belas R."/>
            <person name="Fuqua C."/>
            <person name="Brinkac L.M."/>
            <person name="Lewis M."/>
            <person name="Johri S."/>
            <person name="Weaver B."/>
            <person name="Pai G."/>
            <person name="Eisen J.A."/>
            <person name="Rahe E."/>
            <person name="Sheldon W.M."/>
            <person name="Ye W."/>
            <person name="Miller T.R."/>
            <person name="Carlton J."/>
            <person name="Rasko D.A."/>
            <person name="Paulsen I.T."/>
            <person name="Ren Q."/>
            <person name="Daugherty S.C."/>
            <person name="DeBoy R.T."/>
            <person name="Dodson R.J."/>
            <person name="Durkin A.S."/>
            <person name="Madupu R."/>
            <person name="Nelson W.C."/>
            <person name="Sullivan S.A."/>
            <person name="Rosovitz M.J."/>
            <person name="Haft D.H."/>
            <person name="Selengut J."/>
            <person name="Ward N."/>
        </authorList>
    </citation>
    <scope>NUCLEOTIDE SEQUENCE [LARGE SCALE GENOMIC DNA]</scope>
    <source>
        <strain>ATCC 700808 / DSM 15171 / DSS-3</strain>
    </source>
</reference>
<reference key="2">
    <citation type="journal article" date="2014" name="Stand. Genomic Sci.">
        <title>An updated genome annotation for the model marine bacterium Ruegeria pomeroyi DSS-3.</title>
        <authorList>
            <person name="Rivers A.R."/>
            <person name="Smith C.B."/>
            <person name="Moran M.A."/>
        </authorList>
    </citation>
    <scope>GENOME REANNOTATION</scope>
    <source>
        <strain>ATCC 700808 / DSM 15171 / DSS-3</strain>
    </source>
</reference>
<reference key="3">
    <citation type="journal article" date="2012" name="ISME J.">
        <title>DddW, a third DMSP lyase in a model Roseobacter marine bacterium, Ruegeria pomeroyi DSS-3.</title>
        <authorList>
            <person name="Todd J.D."/>
            <person name="Kirkwood M."/>
            <person name="Newton-Payne S."/>
            <person name="Johnston A.W."/>
        </authorList>
    </citation>
    <scope>FUNCTION</scope>
    <scope>DISRUPTION PHENOTYPE</scope>
    <scope>INDUCTION</scope>
    <source>
        <strain>ATCC 700808 / DSM 15171 / DSS-3</strain>
    </source>
</reference>
<reference key="4">
    <citation type="journal article" date="2015" name="PLoS ONE">
        <title>Biochemical, kinetic, and spectroscopic characterization of Ruegeria pomeroyi DddW-A mononuclear iron-dependent DMSP lyase.</title>
        <authorList>
            <person name="Brummett A.E."/>
            <person name="Schnicker N.J."/>
            <person name="Crider A."/>
            <person name="Todd J.D."/>
            <person name="Dey M."/>
        </authorList>
    </citation>
    <scope>FUNCTION</scope>
    <scope>CATALYTIC ACTIVITY</scope>
    <scope>BIOPHYSICOCHEMICAL PROPERTIES</scope>
    <scope>SUBUNIT</scope>
    <scope>COFACTOR</scope>
    <scope>MUTAGENESIS OF HIS-81; HIS-83; GLU-87 AND HIS-121</scope>
    <source>
        <strain>ATCC 700808 / DSM 15171 / DSS-3</strain>
    </source>
</reference>
<evidence type="ECO:0000250" key="1">
    <source>
        <dbReference type="UniProtKB" id="D0CY60"/>
    </source>
</evidence>
<evidence type="ECO:0000255" key="2"/>
<evidence type="ECO:0000269" key="3">
    <source>
    </source>
</evidence>
<evidence type="ECO:0000269" key="4">
    <source>
    </source>
</evidence>
<evidence type="ECO:0000305" key="5"/>
<evidence type="ECO:0000305" key="6">
    <source>
    </source>
</evidence>
<evidence type="ECO:0000312" key="7">
    <source>
        <dbReference type="EMBL" id="AAV93771.1"/>
    </source>
</evidence>
<comment type="function">
    <text evidence="3 4">Able to cleave dimethylsulfoniopropionate (DMSP), releasing dimethyl sulfide (DMS) and acrylate. DMS is the principal form by which sulfur is transported from oceans to the atmosphere.</text>
</comment>
<comment type="catalytic activity">
    <reaction evidence="4">
        <text>S,S-dimethyl-beta-propiothetin = acrylate + dimethyl sulfide + H(+)</text>
        <dbReference type="Rhea" id="RHEA:19965"/>
        <dbReference type="ChEBI" id="CHEBI:15378"/>
        <dbReference type="ChEBI" id="CHEBI:16457"/>
        <dbReference type="ChEBI" id="CHEBI:17437"/>
        <dbReference type="ChEBI" id="CHEBI:37080"/>
        <dbReference type="EC" id="4.4.1.3"/>
    </reaction>
</comment>
<comment type="cofactor">
    <cofactor evidence="4">
        <name>Fe(2+)</name>
        <dbReference type="ChEBI" id="CHEBI:29033"/>
    </cofactor>
    <text evidence="6">Binds 1 Fe(2+) ion per subunit.</text>
</comment>
<comment type="biophysicochemical properties">
    <kinetics>
        <KM evidence="4">8.68 uM for dimethylsulfoniopropionate (in the presence of Fe(2+))</KM>
        <KM evidence="4">4.5 uM for dimethylsulfoniopropionate (in the presence of Mn(2+))</KM>
        <text evidence="4">kcat is 18.25 sec(-1) with dimethylsulfoniopropionate (in the presence of Fe(2+)). kcat is 17.33 sec(-1) with dimethylsulfoniopropionate (in the presence of Mn(2+)).</text>
    </kinetics>
    <phDependence>
        <text evidence="4">Optimum pH is 8.0.</text>
    </phDependence>
</comment>
<comment type="subunit">
    <text evidence="4">Homodimer.</text>
</comment>
<comment type="induction">
    <text evidence="3">Up-regulated by pre-growth of cells with dimethylsulfoniopropionate (DMSP).</text>
</comment>
<comment type="disruption phenotype">
    <text evidence="3">Decreased production of dimethyl sulfide (DMS).</text>
</comment>
<comment type="similarity">
    <text evidence="5">Belongs to the non-heme iron-dependent dioxygenase family.</text>
</comment>
<name>DDDW_RUEPO</name>
<gene>
    <name evidence="7" type="primary">dddW</name>
    <name evidence="7" type="ordered locus">SPO0453</name>
</gene>
<sequence length="152" mass="16132">MTAMLDSFATDLTAATSLHQPGNLPHPPHAIDAENVPLSGGTDPTYGEVRWRTLINGTEAAPRDMVLGIAEFGPGHQLRPHRHTPPEFYLGLEGSGIVTIDGVPHEIRAGVALYIPGDAEHGTVAGPEGLRFAYGFASASFEAIEYRFTASA</sequence>
<keyword id="KW-0408">Iron</keyword>
<keyword id="KW-0456">Lyase</keyword>
<keyword id="KW-0479">Metal-binding</keyword>
<keyword id="KW-1185">Reference proteome</keyword>
<proteinExistence type="evidence at protein level"/>
<accession>Q5LW89</accession>
<dbReference type="EC" id="4.4.1.3" evidence="4"/>
<dbReference type="EMBL" id="CP000031">
    <property type="protein sequence ID" value="AAV93771.1"/>
    <property type="molecule type" value="Genomic_DNA"/>
</dbReference>
<dbReference type="RefSeq" id="WP_011046214.1">
    <property type="nucleotide sequence ID" value="NC_003911.12"/>
</dbReference>
<dbReference type="SMR" id="Q5LW89"/>
<dbReference type="STRING" id="246200.SPO0453"/>
<dbReference type="PaxDb" id="246200-SPO0453"/>
<dbReference type="KEGG" id="sil:SPO0453"/>
<dbReference type="eggNOG" id="COG0662">
    <property type="taxonomic scope" value="Bacteria"/>
</dbReference>
<dbReference type="HOGENOM" id="CLU_122927_1_0_5"/>
<dbReference type="OrthoDB" id="5592106at2"/>
<dbReference type="BRENDA" id="4.4.1.3">
    <property type="organism ID" value="8123"/>
</dbReference>
<dbReference type="Proteomes" id="UP000001023">
    <property type="component" value="Chromosome"/>
</dbReference>
<dbReference type="GO" id="GO:0047869">
    <property type="term" value="F:dimethylpropiothetin dethiomethylase activity"/>
    <property type="evidence" value="ECO:0000314"/>
    <property type="project" value="UniProtKB"/>
</dbReference>
<dbReference type="GO" id="GO:0046872">
    <property type="term" value="F:metal ion binding"/>
    <property type="evidence" value="ECO:0007669"/>
    <property type="project" value="UniProtKB-KW"/>
</dbReference>
<dbReference type="Gene3D" id="2.60.120.10">
    <property type="entry name" value="Jelly Rolls"/>
    <property type="match status" value="1"/>
</dbReference>
<dbReference type="InterPro" id="IPR013096">
    <property type="entry name" value="Cupin_2"/>
</dbReference>
<dbReference type="InterPro" id="IPR014710">
    <property type="entry name" value="RmlC-like_jellyroll"/>
</dbReference>
<dbReference type="InterPro" id="IPR011051">
    <property type="entry name" value="RmlC_Cupin_sf"/>
</dbReference>
<dbReference type="Pfam" id="PF07883">
    <property type="entry name" value="Cupin_2"/>
    <property type="match status" value="1"/>
</dbReference>
<dbReference type="SUPFAM" id="SSF51182">
    <property type="entry name" value="RmlC-like cupins"/>
    <property type="match status" value="1"/>
</dbReference>
<organism>
    <name type="scientific">Ruegeria pomeroyi (strain ATCC 700808 / DSM 15171 / DSS-3)</name>
    <name type="common">Silicibacter pomeroyi</name>
    <dbReference type="NCBI Taxonomy" id="246200"/>
    <lineage>
        <taxon>Bacteria</taxon>
        <taxon>Pseudomonadati</taxon>
        <taxon>Pseudomonadota</taxon>
        <taxon>Alphaproteobacteria</taxon>
        <taxon>Rhodobacterales</taxon>
        <taxon>Roseobacteraceae</taxon>
        <taxon>Ruegeria</taxon>
    </lineage>
</organism>
<protein>
    <recommendedName>
        <fullName evidence="5">Dimethylsulfoniopropionate lyase DddW</fullName>
        <shortName>DMSP lyase</shortName>
        <ecNumber evidence="4">4.4.1.3</ecNumber>
    </recommendedName>
</protein>
<feature type="chain" id="PRO_0000433900" description="Dimethylsulfoniopropionate lyase DddW">
    <location>
        <begin position="1"/>
        <end position="152"/>
    </location>
</feature>
<feature type="domain" description="Cupin type-2" evidence="2">
    <location>
        <begin position="69"/>
        <end position="124"/>
    </location>
</feature>
<feature type="binding site" evidence="4">
    <location>
        <position position="83"/>
    </location>
    <ligand>
        <name>Fe cation</name>
        <dbReference type="ChEBI" id="CHEBI:24875"/>
    </ligand>
</feature>
<feature type="binding site" evidence="4">
    <location>
        <position position="87"/>
    </location>
    <ligand>
        <name>Fe cation</name>
        <dbReference type="ChEBI" id="CHEBI:24875"/>
    </ligand>
</feature>
<feature type="binding site" evidence="1">
    <location>
        <position position="89"/>
    </location>
    <ligand>
        <name>Fe cation</name>
        <dbReference type="ChEBI" id="CHEBI:24875"/>
    </ligand>
</feature>
<feature type="binding site" evidence="4">
    <location>
        <position position="121"/>
    </location>
    <ligand>
        <name>Fe cation</name>
        <dbReference type="ChEBI" id="CHEBI:24875"/>
    </ligand>
</feature>
<feature type="mutagenesis site" description="Decreased iron binding and enzyme activity toward DMSP." evidence="4">
    <original>H</original>
    <variation>A</variation>
    <location>
        <position position="81"/>
    </location>
</feature>
<feature type="mutagenesis site" description="Decreased iron binding and enzyme activity toward DMSP." evidence="4">
    <original>H</original>
    <variation>A</variation>
    <location>
        <position position="83"/>
    </location>
</feature>
<feature type="mutagenesis site" description="Decreased iron binding and enzyme activity toward DMSP." evidence="4">
    <original>E</original>
    <variation>A</variation>
    <location>
        <position position="87"/>
    </location>
</feature>
<feature type="mutagenesis site" description="Decreased iron binding and enzyme activity toward DMSP." evidence="4">
    <original>H</original>
    <variation>A</variation>
    <location>
        <position position="121"/>
    </location>
</feature>